<reference key="1">
    <citation type="journal article" date="2009" name="PLoS ONE">
        <title>Genome degradation in Brucella ovis corresponds with narrowing of its host range and tissue tropism.</title>
        <authorList>
            <person name="Tsolis R.M."/>
            <person name="Seshadri R."/>
            <person name="Santos R.L."/>
            <person name="Sangari F.J."/>
            <person name="Lobo J.M."/>
            <person name="de Jong M.F."/>
            <person name="Ren Q."/>
            <person name="Myers G."/>
            <person name="Brinkac L.M."/>
            <person name="Nelson W.C."/>
            <person name="Deboy R.T."/>
            <person name="Angiuoli S."/>
            <person name="Khouri H."/>
            <person name="Dimitrov G."/>
            <person name="Robinson J.R."/>
            <person name="Mulligan S."/>
            <person name="Walker R.L."/>
            <person name="Elzer P.E."/>
            <person name="Hassan K.A."/>
            <person name="Paulsen I.T."/>
        </authorList>
    </citation>
    <scope>NUCLEOTIDE SEQUENCE [LARGE SCALE GENOMIC DNA]</scope>
    <source>
        <strain>ATCC 25840 / 63/290 / NCTC 10512</strain>
    </source>
</reference>
<organism>
    <name type="scientific">Brucella ovis (strain ATCC 25840 / 63/290 / NCTC 10512)</name>
    <dbReference type="NCBI Taxonomy" id="444178"/>
    <lineage>
        <taxon>Bacteria</taxon>
        <taxon>Pseudomonadati</taxon>
        <taxon>Pseudomonadota</taxon>
        <taxon>Alphaproteobacteria</taxon>
        <taxon>Hyphomicrobiales</taxon>
        <taxon>Brucellaceae</taxon>
        <taxon>Brucella/Ochrobactrum group</taxon>
        <taxon>Brucella</taxon>
    </lineage>
</organism>
<comment type="function">
    <text evidence="1">Catalyzes a mechanistically unusual reaction, the ATP-dependent insertion of CO2 between the N7 and N8 nitrogen atoms of 7,8-diaminopelargonic acid (DAPA, also called 7,8-diammoniononanoate) to form a ureido ring.</text>
</comment>
<comment type="catalytic activity">
    <reaction evidence="1">
        <text>(7R,8S)-7,8-diammoniononanoate + CO2 + ATP = (4R,5S)-dethiobiotin + ADP + phosphate + 3 H(+)</text>
        <dbReference type="Rhea" id="RHEA:15805"/>
        <dbReference type="ChEBI" id="CHEBI:15378"/>
        <dbReference type="ChEBI" id="CHEBI:16526"/>
        <dbReference type="ChEBI" id="CHEBI:30616"/>
        <dbReference type="ChEBI" id="CHEBI:43474"/>
        <dbReference type="ChEBI" id="CHEBI:149469"/>
        <dbReference type="ChEBI" id="CHEBI:149473"/>
        <dbReference type="ChEBI" id="CHEBI:456216"/>
        <dbReference type="EC" id="6.3.3.3"/>
    </reaction>
</comment>
<comment type="cofactor">
    <cofactor evidence="1">
        <name>Mg(2+)</name>
        <dbReference type="ChEBI" id="CHEBI:18420"/>
    </cofactor>
</comment>
<comment type="pathway">
    <text evidence="1">Cofactor biosynthesis; biotin biosynthesis; biotin from 7,8-diaminononanoate: step 1/2.</text>
</comment>
<comment type="subunit">
    <text evidence="1">Homodimer.</text>
</comment>
<comment type="subcellular location">
    <subcellularLocation>
        <location evidence="1">Cytoplasm</location>
    </subcellularLocation>
</comment>
<comment type="similarity">
    <text evidence="1">Belongs to the dethiobiotin synthetase family.</text>
</comment>
<evidence type="ECO:0000255" key="1">
    <source>
        <dbReference type="HAMAP-Rule" id="MF_00336"/>
    </source>
</evidence>
<dbReference type="EC" id="6.3.3.3" evidence="1"/>
<dbReference type="EMBL" id="CP000709">
    <property type="protein sequence ID" value="ABQ62373.1"/>
    <property type="molecule type" value="Genomic_DNA"/>
</dbReference>
<dbReference type="RefSeq" id="WP_004688969.1">
    <property type="nucleotide sequence ID" value="NC_009504.1"/>
</dbReference>
<dbReference type="SMR" id="A5VUF9"/>
<dbReference type="GeneID" id="97535376"/>
<dbReference type="KEGG" id="bov:BOV_A0428"/>
<dbReference type="HOGENOM" id="CLU_072551_2_0_5"/>
<dbReference type="PhylomeDB" id="A5VUF9"/>
<dbReference type="UniPathway" id="UPA00078">
    <property type="reaction ID" value="UER00161"/>
</dbReference>
<dbReference type="Proteomes" id="UP000006383">
    <property type="component" value="Chromosome II"/>
</dbReference>
<dbReference type="GO" id="GO:0005829">
    <property type="term" value="C:cytosol"/>
    <property type="evidence" value="ECO:0007669"/>
    <property type="project" value="TreeGrafter"/>
</dbReference>
<dbReference type="GO" id="GO:0005524">
    <property type="term" value="F:ATP binding"/>
    <property type="evidence" value="ECO:0007669"/>
    <property type="project" value="UniProtKB-UniRule"/>
</dbReference>
<dbReference type="GO" id="GO:0004141">
    <property type="term" value="F:dethiobiotin synthase activity"/>
    <property type="evidence" value="ECO:0007669"/>
    <property type="project" value="UniProtKB-UniRule"/>
</dbReference>
<dbReference type="GO" id="GO:0000287">
    <property type="term" value="F:magnesium ion binding"/>
    <property type="evidence" value="ECO:0007669"/>
    <property type="project" value="UniProtKB-UniRule"/>
</dbReference>
<dbReference type="GO" id="GO:0009102">
    <property type="term" value="P:biotin biosynthetic process"/>
    <property type="evidence" value="ECO:0007669"/>
    <property type="project" value="UniProtKB-UniRule"/>
</dbReference>
<dbReference type="CDD" id="cd03109">
    <property type="entry name" value="DTBS"/>
    <property type="match status" value="1"/>
</dbReference>
<dbReference type="Gene3D" id="3.40.50.300">
    <property type="entry name" value="P-loop containing nucleotide triphosphate hydrolases"/>
    <property type="match status" value="1"/>
</dbReference>
<dbReference type="HAMAP" id="MF_00336">
    <property type="entry name" value="BioD"/>
    <property type="match status" value="1"/>
</dbReference>
<dbReference type="InterPro" id="IPR004472">
    <property type="entry name" value="DTB_synth_BioD"/>
</dbReference>
<dbReference type="InterPro" id="IPR027417">
    <property type="entry name" value="P-loop_NTPase"/>
</dbReference>
<dbReference type="NCBIfam" id="TIGR00347">
    <property type="entry name" value="bioD"/>
    <property type="match status" value="1"/>
</dbReference>
<dbReference type="PANTHER" id="PTHR43210:SF2">
    <property type="entry name" value="ATP-DEPENDENT DETHIOBIOTIN SYNTHETASE BIOD 2"/>
    <property type="match status" value="1"/>
</dbReference>
<dbReference type="PANTHER" id="PTHR43210">
    <property type="entry name" value="DETHIOBIOTIN SYNTHETASE"/>
    <property type="match status" value="1"/>
</dbReference>
<dbReference type="Pfam" id="PF13500">
    <property type="entry name" value="AAA_26"/>
    <property type="match status" value="1"/>
</dbReference>
<dbReference type="PIRSF" id="PIRSF006755">
    <property type="entry name" value="DTB_synth"/>
    <property type="match status" value="1"/>
</dbReference>
<dbReference type="SUPFAM" id="SSF52540">
    <property type="entry name" value="P-loop containing nucleoside triphosphate hydrolases"/>
    <property type="match status" value="1"/>
</dbReference>
<sequence>MNSRLIVTGTDTGIGKTVFSAALCHALGAAYWKPVQSGLEEETDSEIVARLAQASPQRILPEAWRLNTPASPHLSARLDGVEIRPEEMHIPATSLPLVIEGAGGLLVPLNDKTLFADLFAIWRIPAILCARAALGTINHTLLSLEAMRSRDIPVLGVAFIGEANEDTETTIAHLGRVKRLGRLPLLDDLSPEKLHHSFARNFHIDDFAGVAR</sequence>
<protein>
    <recommendedName>
        <fullName evidence="1">ATP-dependent dethiobiotin synthetase BioD</fullName>
        <ecNumber evidence="1">6.3.3.3</ecNumber>
    </recommendedName>
    <alternativeName>
        <fullName evidence="1">DTB synthetase</fullName>
        <shortName evidence="1">DTBS</shortName>
    </alternativeName>
    <alternativeName>
        <fullName evidence="1">Dethiobiotin synthase</fullName>
    </alternativeName>
</protein>
<gene>
    <name evidence="1" type="primary">bioD</name>
    <name type="ordered locus">BOV_A0428</name>
</gene>
<feature type="chain" id="PRO_1000019549" description="ATP-dependent dethiobiotin synthetase BioD">
    <location>
        <begin position="1"/>
        <end position="212"/>
    </location>
</feature>
<feature type="active site" evidence="1">
    <location>
        <position position="33"/>
    </location>
</feature>
<feature type="binding site" evidence="1">
    <location>
        <begin position="13"/>
        <end position="18"/>
    </location>
    <ligand>
        <name>ATP</name>
        <dbReference type="ChEBI" id="CHEBI:30616"/>
    </ligand>
</feature>
<feature type="binding site" evidence="1">
    <location>
        <position position="17"/>
    </location>
    <ligand>
        <name>Mg(2+)</name>
        <dbReference type="ChEBI" id="CHEBI:18420"/>
    </ligand>
</feature>
<feature type="binding site" evidence="1">
    <location>
        <position position="37"/>
    </location>
    <ligand>
        <name>substrate</name>
    </ligand>
</feature>
<feature type="binding site" evidence="1">
    <location>
        <begin position="100"/>
        <end position="103"/>
    </location>
    <ligand>
        <name>ATP</name>
        <dbReference type="ChEBI" id="CHEBI:30616"/>
    </ligand>
</feature>
<feature type="binding site" evidence="1">
    <location>
        <position position="100"/>
    </location>
    <ligand>
        <name>Mg(2+)</name>
        <dbReference type="ChEBI" id="CHEBI:18420"/>
    </ligand>
</feature>
<feature type="binding site" evidence="1">
    <location>
        <begin position="184"/>
        <end position="186"/>
    </location>
    <ligand>
        <name>ATP</name>
        <dbReference type="ChEBI" id="CHEBI:30616"/>
    </ligand>
</feature>
<proteinExistence type="inferred from homology"/>
<accession>A5VUF9</accession>
<name>BIOD_BRUO2</name>
<keyword id="KW-0067">ATP-binding</keyword>
<keyword id="KW-0093">Biotin biosynthesis</keyword>
<keyword id="KW-0963">Cytoplasm</keyword>
<keyword id="KW-0436">Ligase</keyword>
<keyword id="KW-0460">Magnesium</keyword>
<keyword id="KW-0479">Metal-binding</keyword>
<keyword id="KW-0547">Nucleotide-binding</keyword>